<evidence type="ECO:0000255" key="1">
    <source>
        <dbReference type="HAMAP-Rule" id="MF_01316"/>
    </source>
</evidence>
<gene>
    <name evidence="1" type="primary">psbI</name>
</gene>
<proteinExistence type="inferred from homology"/>
<sequence>MLTLKLFVYTVVIFFVSLFIFGFLSNDPGRNPGREE</sequence>
<accession>Q2MIB6</accession>
<keyword id="KW-0150">Chloroplast</keyword>
<keyword id="KW-0472">Membrane</keyword>
<keyword id="KW-0602">Photosynthesis</keyword>
<keyword id="KW-0604">Photosystem II</keyword>
<keyword id="KW-0934">Plastid</keyword>
<keyword id="KW-0674">Reaction center</keyword>
<keyword id="KW-1185">Reference proteome</keyword>
<keyword id="KW-0793">Thylakoid</keyword>
<keyword id="KW-0812">Transmembrane</keyword>
<keyword id="KW-1133">Transmembrane helix</keyword>
<protein>
    <recommendedName>
        <fullName evidence="1">Photosystem II reaction center protein I</fullName>
        <shortName evidence="1">PSII-I</shortName>
    </recommendedName>
    <alternativeName>
        <fullName evidence="1">PSII 4.8 kDa protein</fullName>
    </alternativeName>
</protein>
<feature type="chain" id="PRO_0000275810" description="Photosystem II reaction center protein I">
    <location>
        <begin position="1"/>
        <end position="36"/>
    </location>
</feature>
<feature type="transmembrane region" description="Helical" evidence="1">
    <location>
        <begin position="4"/>
        <end position="24"/>
    </location>
</feature>
<comment type="function">
    <text evidence="1">One of the components of the core complex of photosystem II (PSII), required for its stability and/or assembly. PSII is a light-driven water:plastoquinone oxidoreductase that uses light energy to abstract electrons from H(2)O, generating O(2) and a proton gradient subsequently used for ATP formation. It consists of a core antenna complex that captures photons, and an electron transfer chain that converts photonic excitation into a charge separation.</text>
</comment>
<comment type="subunit">
    <text evidence="1">PSII is composed of 1 copy each of membrane proteins PsbA, PsbB, PsbC, PsbD, PsbE, PsbF, PsbH, PsbI, PsbJ, PsbK, PsbL, PsbM, PsbT, PsbX, PsbY, PsbZ, Psb30/Ycf12, at least 3 peripheral proteins of the oxygen-evolving complex and a large number of cofactors. It forms dimeric complexes.</text>
</comment>
<comment type="subcellular location">
    <subcellularLocation>
        <location evidence="1">Plastid</location>
        <location evidence="1">Chloroplast thylakoid membrane</location>
        <topology evidence="1">Single-pass membrane protein</topology>
    </subcellularLocation>
</comment>
<comment type="similarity">
    <text evidence="1">Belongs to the PsbI family.</text>
</comment>
<dbReference type="EMBL" id="DQ347959">
    <property type="protein sequence ID" value="ABC56284.1"/>
    <property type="molecule type" value="Genomic_DNA"/>
</dbReference>
<dbReference type="EMBL" id="AM087200">
    <property type="protein sequence ID" value="CAJ32377.1"/>
    <property type="molecule type" value="Genomic_DNA"/>
</dbReference>
<dbReference type="RefSeq" id="AP_004912.1">
    <property type="nucleotide sequence ID" value="AC_000188.1"/>
</dbReference>
<dbReference type="RefSeq" id="YP_008563072.1">
    <property type="nucleotide sequence ID" value="NC_007898.3"/>
</dbReference>
<dbReference type="SMR" id="Q2MIB6"/>
<dbReference type="FunCoup" id="Q2MIB6">
    <property type="interactions" value="55"/>
</dbReference>
<dbReference type="STRING" id="4081.Q2MIB6"/>
<dbReference type="PaxDb" id="4081-Solyc02g038710.1.1"/>
<dbReference type="GeneID" id="3950390"/>
<dbReference type="KEGG" id="sly:3950390"/>
<dbReference type="eggNOG" id="ENOG502SEUZ">
    <property type="taxonomic scope" value="Eukaryota"/>
</dbReference>
<dbReference type="InParanoid" id="Q2MIB6"/>
<dbReference type="OrthoDB" id="564007at2759"/>
<dbReference type="Proteomes" id="UP000004994">
    <property type="component" value="Chloroplast"/>
</dbReference>
<dbReference type="GO" id="GO:0009535">
    <property type="term" value="C:chloroplast thylakoid membrane"/>
    <property type="evidence" value="ECO:0007669"/>
    <property type="project" value="UniProtKB-SubCell"/>
</dbReference>
<dbReference type="GO" id="GO:0009539">
    <property type="term" value="C:photosystem II reaction center"/>
    <property type="evidence" value="ECO:0007669"/>
    <property type="project" value="InterPro"/>
</dbReference>
<dbReference type="GO" id="GO:0015979">
    <property type="term" value="P:photosynthesis"/>
    <property type="evidence" value="ECO:0007669"/>
    <property type="project" value="UniProtKB-UniRule"/>
</dbReference>
<dbReference type="HAMAP" id="MF_01316">
    <property type="entry name" value="PSII_PsbI"/>
    <property type="match status" value="1"/>
</dbReference>
<dbReference type="InterPro" id="IPR003686">
    <property type="entry name" value="PSII_PsbI"/>
</dbReference>
<dbReference type="InterPro" id="IPR037271">
    <property type="entry name" value="PSII_PsbI_sf"/>
</dbReference>
<dbReference type="NCBIfam" id="NF002735">
    <property type="entry name" value="PRK02655.1"/>
    <property type="match status" value="1"/>
</dbReference>
<dbReference type="PANTHER" id="PTHR35772">
    <property type="entry name" value="PHOTOSYSTEM II REACTION CENTER PROTEIN I"/>
    <property type="match status" value="1"/>
</dbReference>
<dbReference type="PANTHER" id="PTHR35772:SF1">
    <property type="entry name" value="PHOTOSYSTEM II REACTION CENTER PROTEIN I"/>
    <property type="match status" value="1"/>
</dbReference>
<dbReference type="Pfam" id="PF02532">
    <property type="entry name" value="PsbI"/>
    <property type="match status" value="1"/>
</dbReference>
<dbReference type="SUPFAM" id="SSF161041">
    <property type="entry name" value="Photosystem II reaction center protein I, PsbI"/>
    <property type="match status" value="1"/>
</dbReference>
<organism>
    <name type="scientific">Solanum lycopersicum</name>
    <name type="common">Tomato</name>
    <name type="synonym">Lycopersicon esculentum</name>
    <dbReference type="NCBI Taxonomy" id="4081"/>
    <lineage>
        <taxon>Eukaryota</taxon>
        <taxon>Viridiplantae</taxon>
        <taxon>Streptophyta</taxon>
        <taxon>Embryophyta</taxon>
        <taxon>Tracheophyta</taxon>
        <taxon>Spermatophyta</taxon>
        <taxon>Magnoliopsida</taxon>
        <taxon>eudicotyledons</taxon>
        <taxon>Gunneridae</taxon>
        <taxon>Pentapetalae</taxon>
        <taxon>asterids</taxon>
        <taxon>lamiids</taxon>
        <taxon>Solanales</taxon>
        <taxon>Solanaceae</taxon>
        <taxon>Solanoideae</taxon>
        <taxon>Solaneae</taxon>
        <taxon>Solanum</taxon>
        <taxon>Solanum subgen. Lycopersicon</taxon>
    </lineage>
</organism>
<geneLocation type="chloroplast"/>
<name>PSBI_SOLLC</name>
<reference key="1">
    <citation type="journal article" date="2006" name="Theor. Appl. Genet.">
        <title>Complete chloroplast genome sequences of Solanum bulbocastanum, Solanum lycopersicum and comparative analyses with other Solanaceae genomes.</title>
        <authorList>
            <person name="Daniell H."/>
            <person name="Lee S.-B."/>
            <person name="Grevich J."/>
            <person name="Saski C."/>
            <person name="Quesada-Vargas T."/>
            <person name="Guda C."/>
            <person name="Tomkins J."/>
            <person name="Jansen R.K."/>
        </authorList>
    </citation>
    <scope>NUCLEOTIDE SEQUENCE [LARGE SCALE GENOMIC DNA]</scope>
    <source>
        <strain>cv. LA3023</strain>
    </source>
</reference>
<reference key="2">
    <citation type="journal article" date="2006" name="J. Mol. Evol.">
        <title>Sequence of the tomato chloroplast DNA and evolutionary comparison of solanaceous plastid genomes.</title>
        <authorList>
            <person name="Kahlau S."/>
            <person name="Aspinall S."/>
            <person name="Gray J.C."/>
            <person name="Bock R."/>
        </authorList>
    </citation>
    <scope>NUCLEOTIDE SEQUENCE [LARGE SCALE GENOMIC DNA]</scope>
    <source>
        <strain>cv. IPA-6</strain>
    </source>
</reference>